<protein>
    <recommendedName>
        <fullName evidence="1">Elongation factor Ts</fullName>
        <shortName evidence="1">EF-Ts</shortName>
    </recommendedName>
</protein>
<name>EFTS_POLAQ</name>
<feature type="chain" id="PRO_1000074872" description="Elongation factor Ts">
    <location>
        <begin position="1"/>
        <end position="294"/>
    </location>
</feature>
<feature type="region of interest" description="Involved in Mg(2+) ion dislocation from EF-Tu" evidence="1">
    <location>
        <begin position="80"/>
        <end position="83"/>
    </location>
</feature>
<gene>
    <name evidence="1" type="primary">tsf</name>
    <name type="ordered locus">Pnuc_1450</name>
</gene>
<proteinExistence type="inferred from homology"/>
<reference key="1">
    <citation type="journal article" date="2012" name="Stand. Genomic Sci.">
        <title>Complete genome sequence of Polynucleobacter necessarius subsp. asymbioticus type strain (QLW-P1DMWA-1(T)).</title>
        <authorList>
            <person name="Meincke L."/>
            <person name="Copeland A."/>
            <person name="Lapidus A."/>
            <person name="Lucas S."/>
            <person name="Berry K.W."/>
            <person name="Del Rio T.G."/>
            <person name="Hammon N."/>
            <person name="Dalin E."/>
            <person name="Tice H."/>
            <person name="Pitluck S."/>
            <person name="Richardson P."/>
            <person name="Bruce D."/>
            <person name="Goodwin L."/>
            <person name="Han C."/>
            <person name="Tapia R."/>
            <person name="Detter J.C."/>
            <person name="Schmutz J."/>
            <person name="Brettin T."/>
            <person name="Larimer F."/>
            <person name="Land M."/>
            <person name="Hauser L."/>
            <person name="Kyrpides N.C."/>
            <person name="Ivanova N."/>
            <person name="Goker M."/>
            <person name="Woyke T."/>
            <person name="Wu Q.L."/>
            <person name="Pockl M."/>
            <person name="Hahn M.W."/>
            <person name="Klenk H.P."/>
        </authorList>
    </citation>
    <scope>NUCLEOTIDE SEQUENCE [LARGE SCALE GENOMIC DNA]</scope>
    <source>
        <strain>DSM 18221 / CIP 109841 / QLW-P1DMWA-1</strain>
    </source>
</reference>
<dbReference type="EMBL" id="CP000655">
    <property type="protein sequence ID" value="ABP34664.1"/>
    <property type="molecule type" value="Genomic_DNA"/>
</dbReference>
<dbReference type="RefSeq" id="WP_011903287.1">
    <property type="nucleotide sequence ID" value="NC_009379.1"/>
</dbReference>
<dbReference type="SMR" id="A4SYV0"/>
<dbReference type="GeneID" id="31481840"/>
<dbReference type="KEGG" id="pnu:Pnuc_1450"/>
<dbReference type="eggNOG" id="COG0264">
    <property type="taxonomic scope" value="Bacteria"/>
</dbReference>
<dbReference type="HOGENOM" id="CLU_047155_0_2_4"/>
<dbReference type="Proteomes" id="UP000000231">
    <property type="component" value="Chromosome"/>
</dbReference>
<dbReference type="GO" id="GO:0005737">
    <property type="term" value="C:cytoplasm"/>
    <property type="evidence" value="ECO:0007669"/>
    <property type="project" value="UniProtKB-SubCell"/>
</dbReference>
<dbReference type="GO" id="GO:0003746">
    <property type="term" value="F:translation elongation factor activity"/>
    <property type="evidence" value="ECO:0007669"/>
    <property type="project" value="UniProtKB-UniRule"/>
</dbReference>
<dbReference type="CDD" id="cd14275">
    <property type="entry name" value="UBA_EF-Ts"/>
    <property type="match status" value="1"/>
</dbReference>
<dbReference type="FunFam" id="1.10.286.20:FF:000001">
    <property type="entry name" value="Elongation factor Ts"/>
    <property type="match status" value="1"/>
</dbReference>
<dbReference type="FunFam" id="1.10.8.10:FF:000001">
    <property type="entry name" value="Elongation factor Ts"/>
    <property type="match status" value="1"/>
</dbReference>
<dbReference type="Gene3D" id="1.10.286.20">
    <property type="match status" value="1"/>
</dbReference>
<dbReference type="Gene3D" id="1.10.8.10">
    <property type="entry name" value="DNA helicase RuvA subunit, C-terminal domain"/>
    <property type="match status" value="1"/>
</dbReference>
<dbReference type="Gene3D" id="3.30.479.20">
    <property type="entry name" value="Elongation factor Ts, dimerisation domain"/>
    <property type="match status" value="2"/>
</dbReference>
<dbReference type="HAMAP" id="MF_00050">
    <property type="entry name" value="EF_Ts"/>
    <property type="match status" value="1"/>
</dbReference>
<dbReference type="InterPro" id="IPR036402">
    <property type="entry name" value="EF-Ts_dimer_sf"/>
</dbReference>
<dbReference type="InterPro" id="IPR001816">
    <property type="entry name" value="Transl_elong_EFTs/EF1B"/>
</dbReference>
<dbReference type="InterPro" id="IPR014039">
    <property type="entry name" value="Transl_elong_EFTs/EF1B_dimer"/>
</dbReference>
<dbReference type="InterPro" id="IPR018101">
    <property type="entry name" value="Transl_elong_Ts_CS"/>
</dbReference>
<dbReference type="InterPro" id="IPR009060">
    <property type="entry name" value="UBA-like_sf"/>
</dbReference>
<dbReference type="NCBIfam" id="TIGR00116">
    <property type="entry name" value="tsf"/>
    <property type="match status" value="1"/>
</dbReference>
<dbReference type="PANTHER" id="PTHR11741">
    <property type="entry name" value="ELONGATION FACTOR TS"/>
    <property type="match status" value="1"/>
</dbReference>
<dbReference type="PANTHER" id="PTHR11741:SF0">
    <property type="entry name" value="ELONGATION FACTOR TS, MITOCHONDRIAL"/>
    <property type="match status" value="1"/>
</dbReference>
<dbReference type="Pfam" id="PF00889">
    <property type="entry name" value="EF_TS"/>
    <property type="match status" value="1"/>
</dbReference>
<dbReference type="SUPFAM" id="SSF54713">
    <property type="entry name" value="Elongation factor Ts (EF-Ts), dimerisation domain"/>
    <property type="match status" value="2"/>
</dbReference>
<dbReference type="SUPFAM" id="SSF46934">
    <property type="entry name" value="UBA-like"/>
    <property type="match status" value="1"/>
</dbReference>
<dbReference type="PROSITE" id="PS01127">
    <property type="entry name" value="EF_TS_2"/>
    <property type="match status" value="1"/>
</dbReference>
<sequence>MAAITAAMVGELRAKTDAPMMECKKALTEADGDMARAEEILRVKLGSKAGKAASRVTAEGIVATAINGSTGALLEVNCETDFVSKNDDFLAFVNDCVKLVAEKNPADVAALLALPLNGQTVDEVRSALIGKIGENIMPRRFKRFTGSNKLVSYLHGTRIGVMVEFEGDDTAAKDVAMHIAAMKPVALSMADVPAESIAIERSVAVQKAAESGKPPEIVEKMVEGSIQKYLKEVSLLNQTFVKNDKQTVEQMLKAANTTIKGFTMYVVGEGIEKRQDDFAAEVAAQVAAASKATA</sequence>
<evidence type="ECO:0000255" key="1">
    <source>
        <dbReference type="HAMAP-Rule" id="MF_00050"/>
    </source>
</evidence>
<keyword id="KW-0963">Cytoplasm</keyword>
<keyword id="KW-0251">Elongation factor</keyword>
<keyword id="KW-0648">Protein biosynthesis</keyword>
<keyword id="KW-1185">Reference proteome</keyword>
<comment type="function">
    <text evidence="1">Associates with the EF-Tu.GDP complex and induces the exchange of GDP to GTP. It remains bound to the aminoacyl-tRNA.EF-Tu.GTP complex up to the GTP hydrolysis stage on the ribosome.</text>
</comment>
<comment type="subcellular location">
    <subcellularLocation>
        <location evidence="1">Cytoplasm</location>
    </subcellularLocation>
</comment>
<comment type="similarity">
    <text evidence="1">Belongs to the EF-Ts family.</text>
</comment>
<organism>
    <name type="scientific">Polynucleobacter asymbioticus (strain DSM 18221 / CIP 109841 / QLW-P1DMWA-1)</name>
    <name type="common">Polynucleobacter necessarius subsp. asymbioticus</name>
    <dbReference type="NCBI Taxonomy" id="312153"/>
    <lineage>
        <taxon>Bacteria</taxon>
        <taxon>Pseudomonadati</taxon>
        <taxon>Pseudomonadota</taxon>
        <taxon>Betaproteobacteria</taxon>
        <taxon>Burkholderiales</taxon>
        <taxon>Burkholderiaceae</taxon>
        <taxon>Polynucleobacter</taxon>
    </lineage>
</organism>
<accession>A4SYV0</accession>